<name>LYXK_ECOLI</name>
<comment type="function">
    <text evidence="1 2">Catalyzes the phosphorylation of L-xylulose and 3-keto-L-gulonate. Is involved in L-lyxose utilization via xylulose, and may also be involved in the utilization of 2,3-diketo-L-gulonate.</text>
</comment>
<comment type="catalytic activity">
    <reaction evidence="1 2">
        <text>L-xylulose + ATP = L-xylulose 5-phosphate + ADP + H(+)</text>
        <dbReference type="Rhea" id="RHEA:18869"/>
        <dbReference type="ChEBI" id="CHEBI:15378"/>
        <dbReference type="ChEBI" id="CHEBI:17399"/>
        <dbReference type="ChEBI" id="CHEBI:30616"/>
        <dbReference type="ChEBI" id="CHEBI:57829"/>
        <dbReference type="ChEBI" id="CHEBI:456216"/>
        <dbReference type="EC" id="2.7.1.53"/>
    </reaction>
    <physiologicalReaction direction="left-to-right" evidence="2">
        <dbReference type="Rhea" id="RHEA:18870"/>
    </physiologicalReaction>
</comment>
<comment type="catalytic activity">
    <reaction evidence="1">
        <text>3-dehydro-L-gulonate + ATP = 3-dehydro-L-gulonate 6-phosphate + ADP + H(+)</text>
        <dbReference type="Rhea" id="RHEA:28222"/>
        <dbReference type="ChEBI" id="CHEBI:15378"/>
        <dbReference type="ChEBI" id="CHEBI:30616"/>
        <dbReference type="ChEBI" id="CHEBI:57655"/>
        <dbReference type="ChEBI" id="CHEBI:58774"/>
        <dbReference type="ChEBI" id="CHEBI:456216"/>
    </reaction>
    <physiologicalReaction direction="left-to-right" evidence="1">
        <dbReference type="Rhea" id="RHEA:28223"/>
    </physiologicalReaction>
</comment>
<comment type="biophysicochemical properties">
    <kinetics>
        <KM evidence="2">0.8 mM for L-xylulose</KM>
        <KM evidence="2">0.4 mM for ATP</KM>
        <Vmax evidence="2">33.0 umol/min/mg enzyme with L-xylulose as substrate</Vmax>
    </kinetics>
    <phDependence>
        <text evidence="2">Optimum pH is 8.4 with L-xylulose as substrate.</text>
    </phDependence>
</comment>
<comment type="subunit">
    <text evidence="2">Homodimer.</text>
</comment>
<comment type="similarity">
    <text evidence="3">Belongs to the FGGY kinase family.</text>
</comment>
<gene>
    <name type="primary">lyx</name>
    <name type="synonym">lyxK</name>
    <name type="synonym">sgbK</name>
    <name type="synonym">xylK</name>
    <name type="synonym">yiaP</name>
    <name type="ordered locus">b3580</name>
    <name type="ordered locus">JW3552</name>
</gene>
<dbReference type="EC" id="2.7.1.-" evidence="1 2"/>
<dbReference type="EC" id="2.7.1.53" evidence="1 2"/>
<dbReference type="EMBL" id="U00039">
    <property type="protein sequence ID" value="AAB18557.1"/>
    <property type="molecule type" value="Genomic_DNA"/>
</dbReference>
<dbReference type="EMBL" id="U00096">
    <property type="protein sequence ID" value="AAC76604.1"/>
    <property type="molecule type" value="Genomic_DNA"/>
</dbReference>
<dbReference type="EMBL" id="AP009048">
    <property type="protein sequence ID" value="BAE77713.1"/>
    <property type="molecule type" value="Genomic_DNA"/>
</dbReference>
<dbReference type="PIR" id="S47801">
    <property type="entry name" value="S47801"/>
</dbReference>
<dbReference type="RefSeq" id="NP_418037.1">
    <property type="nucleotide sequence ID" value="NC_000913.3"/>
</dbReference>
<dbReference type="RefSeq" id="WP_000196054.1">
    <property type="nucleotide sequence ID" value="NZ_SSZK01000041.1"/>
</dbReference>
<dbReference type="SMR" id="P37677"/>
<dbReference type="BioGRID" id="4262550">
    <property type="interactions" value="10"/>
</dbReference>
<dbReference type="FunCoup" id="P37677">
    <property type="interactions" value="167"/>
</dbReference>
<dbReference type="IntAct" id="P37677">
    <property type="interactions" value="2"/>
</dbReference>
<dbReference type="STRING" id="511145.b3580"/>
<dbReference type="PaxDb" id="511145-b3580"/>
<dbReference type="DNASU" id="948101"/>
<dbReference type="EnsemblBacteria" id="AAC76604">
    <property type="protein sequence ID" value="AAC76604"/>
    <property type="gene ID" value="b3580"/>
</dbReference>
<dbReference type="GeneID" id="948101"/>
<dbReference type="KEGG" id="ecj:JW3552"/>
<dbReference type="KEGG" id="eco:b3580"/>
<dbReference type="KEGG" id="ecoc:C3026_19410"/>
<dbReference type="PATRIC" id="fig|1411691.4.peg.3132"/>
<dbReference type="EchoBASE" id="EB2192"/>
<dbReference type="eggNOG" id="COG1070">
    <property type="taxonomic scope" value="Bacteria"/>
</dbReference>
<dbReference type="HOGENOM" id="CLU_009281_3_1_6"/>
<dbReference type="InParanoid" id="P37677"/>
<dbReference type="OMA" id="GMQAGFY"/>
<dbReference type="OrthoDB" id="9805576at2"/>
<dbReference type="PhylomeDB" id="P37677"/>
<dbReference type="BioCyc" id="EcoCyc:LYXK-MONOMER"/>
<dbReference type="BioCyc" id="MetaCyc:LYXK-MONOMER"/>
<dbReference type="BRENDA" id="2.7.1.53">
    <property type="organism ID" value="2026"/>
</dbReference>
<dbReference type="PRO" id="PR:P37677"/>
<dbReference type="Proteomes" id="UP000000625">
    <property type="component" value="Chromosome"/>
</dbReference>
<dbReference type="GO" id="GO:0005524">
    <property type="term" value="F:ATP binding"/>
    <property type="evidence" value="ECO:0007669"/>
    <property type="project" value="UniProtKB-KW"/>
</dbReference>
<dbReference type="GO" id="GO:0008744">
    <property type="term" value="F:L-xylulokinase activity"/>
    <property type="evidence" value="ECO:0000314"/>
    <property type="project" value="EcoCyc"/>
</dbReference>
<dbReference type="GO" id="GO:0016773">
    <property type="term" value="F:phosphotransferase activity, alcohol group as acceptor"/>
    <property type="evidence" value="ECO:0007669"/>
    <property type="project" value="InterPro"/>
</dbReference>
<dbReference type="GO" id="GO:0042803">
    <property type="term" value="F:protein homodimerization activity"/>
    <property type="evidence" value="ECO:0000314"/>
    <property type="project" value="EcoCyc"/>
</dbReference>
<dbReference type="GO" id="GO:0019324">
    <property type="term" value="P:L-lyxose metabolic process"/>
    <property type="evidence" value="ECO:0000315"/>
    <property type="project" value="EcoCyc"/>
</dbReference>
<dbReference type="CDD" id="cd07802">
    <property type="entry name" value="ASKHA_NBD_FGGY_EcLyxK-like"/>
    <property type="match status" value="1"/>
</dbReference>
<dbReference type="FunFam" id="3.30.420.40:FF:000200">
    <property type="entry name" value="L-xylulose/3-keto-L-gulonate kinase"/>
    <property type="match status" value="1"/>
</dbReference>
<dbReference type="FunFam" id="3.30.420.40:FF:000212">
    <property type="entry name" value="L-xylulose/3-keto-L-gulonate kinase"/>
    <property type="match status" value="1"/>
</dbReference>
<dbReference type="Gene3D" id="3.30.420.40">
    <property type="match status" value="2"/>
</dbReference>
<dbReference type="InterPro" id="IPR043129">
    <property type="entry name" value="ATPase_NBD"/>
</dbReference>
<dbReference type="InterPro" id="IPR000577">
    <property type="entry name" value="Carb_kinase_FGGY"/>
</dbReference>
<dbReference type="InterPro" id="IPR018483">
    <property type="entry name" value="Carb_kinase_FGGY_CS"/>
</dbReference>
<dbReference type="InterPro" id="IPR018485">
    <property type="entry name" value="FGGY_C"/>
</dbReference>
<dbReference type="InterPro" id="IPR050406">
    <property type="entry name" value="FGGY_Carb_Kinase"/>
</dbReference>
<dbReference type="InterPro" id="IPR018484">
    <property type="entry name" value="FGGY_N"/>
</dbReference>
<dbReference type="PANTHER" id="PTHR43095:SF3">
    <property type="entry name" value="L-XYLULOSE_3-KETO-L-GULONATE KINASE"/>
    <property type="match status" value="1"/>
</dbReference>
<dbReference type="PANTHER" id="PTHR43095">
    <property type="entry name" value="SUGAR KINASE"/>
    <property type="match status" value="1"/>
</dbReference>
<dbReference type="Pfam" id="PF02782">
    <property type="entry name" value="FGGY_C"/>
    <property type="match status" value="1"/>
</dbReference>
<dbReference type="Pfam" id="PF00370">
    <property type="entry name" value="FGGY_N"/>
    <property type="match status" value="1"/>
</dbReference>
<dbReference type="PIRSF" id="PIRSF000538">
    <property type="entry name" value="GlpK"/>
    <property type="match status" value="1"/>
</dbReference>
<dbReference type="SUPFAM" id="SSF53067">
    <property type="entry name" value="Actin-like ATPase domain"/>
    <property type="match status" value="2"/>
</dbReference>
<dbReference type="PROSITE" id="PS00445">
    <property type="entry name" value="FGGY_KINASES_2"/>
    <property type="match status" value="1"/>
</dbReference>
<sequence length="498" mass="55155">MTQYWLGLDCGGSWLKAGLYDREGREAGVQRLPLCALSPQPGWAERDMAELWQCCMAVIRALLTHSGVSGEQIVGIGISAQGKGLFLLDKNDKPLGNAILSSDRRAMEIVRRWQEDGIPEKLYPLTRQTLWTGHPVSLLRWLKEHEPERYAQIGCVMMTHDYLRWCLTGVKGCEESNISESNLYNMSLGEYDPCLTDWLGIAEINHALPPVVGSAEICGEITAQTAALTGLKAGTPVVGGLFDVVSTALCAGIEDEFTLNAVMGTWAVTSGITRGLRDGEAHPYVYGRYVNDGEFIVHEASPTSSGNLEWFTAQWGEISFDEINQAVASLPKAGGDLFFLPFLYGSNAGLEMTSGFYGMQAIHTRAHLLQAIYEGVVFSHMTHLNRMRERFTDVHTLRVTGGPAHSDVWMQMLADVSGLRIELPQVEETGCFGAALAARVGTGVYHNFSEAQRDLRHPVRTLLPDMTAHQLYQKKYQRYQHLIAALQGFHARIKEHTL</sequence>
<evidence type="ECO:0000269" key="1">
    <source>
    </source>
</evidence>
<evidence type="ECO:0000269" key="2">
    <source>
    </source>
</evidence>
<evidence type="ECO:0000305" key="3"/>
<feature type="chain" id="PRO_0000059560" description="L-xylulose/3-keto-L-gulonate kinase">
    <location>
        <begin position="1"/>
        <end position="498"/>
    </location>
</feature>
<accession>P37677</accession>
<accession>Q2M7P3</accession>
<keyword id="KW-0067">ATP-binding</keyword>
<keyword id="KW-0119">Carbohydrate metabolism</keyword>
<keyword id="KW-0418">Kinase</keyword>
<keyword id="KW-0547">Nucleotide-binding</keyword>
<keyword id="KW-1185">Reference proteome</keyword>
<keyword id="KW-0808">Transferase</keyword>
<protein>
    <recommendedName>
        <fullName>L-xylulose/3-keto-L-gulonate kinase</fullName>
        <shortName>L-xylulokinase</shortName>
        <ecNumber evidence="1 2">2.7.1.-</ecNumber>
        <ecNumber evidence="1 2">2.7.1.53</ecNumber>
    </recommendedName>
    <alternativeName>
        <fullName>3-dehydro-L-gulonate kinase</fullName>
    </alternativeName>
</protein>
<proteinExistence type="evidence at protein level"/>
<reference key="1">
    <citation type="journal article" date="1994" name="Nucleic Acids Res.">
        <title>Analysis of the Escherichia coli genome. V. DNA sequence of the region from 76.0 to 81.5 minutes.</title>
        <authorList>
            <person name="Sofia H.J."/>
            <person name="Burland V."/>
            <person name="Daniels D.L."/>
            <person name="Plunkett G. III"/>
            <person name="Blattner F.R."/>
        </authorList>
    </citation>
    <scope>NUCLEOTIDE SEQUENCE [LARGE SCALE GENOMIC DNA]</scope>
    <source>
        <strain>K12 / MG1655 / ATCC 47076</strain>
    </source>
</reference>
<reference key="2">
    <citation type="journal article" date="1997" name="Science">
        <title>The complete genome sequence of Escherichia coli K-12.</title>
        <authorList>
            <person name="Blattner F.R."/>
            <person name="Plunkett G. III"/>
            <person name="Bloch C.A."/>
            <person name="Perna N.T."/>
            <person name="Burland V."/>
            <person name="Riley M."/>
            <person name="Collado-Vides J."/>
            <person name="Glasner J.D."/>
            <person name="Rode C.K."/>
            <person name="Mayhew G.F."/>
            <person name="Gregor J."/>
            <person name="Davis N.W."/>
            <person name="Kirkpatrick H.A."/>
            <person name="Goeden M.A."/>
            <person name="Rose D.J."/>
            <person name="Mau B."/>
            <person name="Shao Y."/>
        </authorList>
    </citation>
    <scope>NUCLEOTIDE SEQUENCE [LARGE SCALE GENOMIC DNA]</scope>
    <source>
        <strain>K12 / MG1655 / ATCC 47076</strain>
    </source>
</reference>
<reference key="3">
    <citation type="journal article" date="2006" name="Mol. Syst. Biol.">
        <title>Highly accurate genome sequences of Escherichia coli K-12 strains MG1655 and W3110.</title>
        <authorList>
            <person name="Hayashi K."/>
            <person name="Morooka N."/>
            <person name="Yamamoto Y."/>
            <person name="Fujita K."/>
            <person name="Isono K."/>
            <person name="Choi S."/>
            <person name="Ohtsubo E."/>
            <person name="Baba T."/>
            <person name="Wanner B.L."/>
            <person name="Mori H."/>
            <person name="Horiuchi T."/>
        </authorList>
    </citation>
    <scope>NUCLEOTIDE SEQUENCE [LARGE SCALE GENOMIC DNA]</scope>
    <source>
        <strain>K12 / W3110 / ATCC 27325 / DSM 5911</strain>
    </source>
</reference>
<reference key="4">
    <citation type="journal article" date="1994" name="J. Biol. Chem.">
        <title>Activation of a cryptic gene encoding a kinase for L-xylulose opens a new pathway for the utilization of L-lyxose by Escherichia coli.</title>
        <authorList>
            <person name="Sanchez J.C."/>
            <person name="Gimenez R."/>
            <person name="Schneider A."/>
            <person name="Fessner W.-D."/>
            <person name="Baldoma L."/>
            <person name="Aquilar J."/>
            <person name="Badia J."/>
        </authorList>
    </citation>
    <scope>FUNCTION</scope>
    <scope>CATALYTIC ACTIVITY</scope>
    <scope>SUBUNIT</scope>
    <scope>BIOPHYSICOCHEMICAL PROPERTIES</scope>
    <source>
        <strain>K12</strain>
    </source>
</reference>
<reference key="5">
    <citation type="journal article" date="1996" name="Genome Sci. Technol.">
        <title>Novel phosphotransferases system genes revealed by bacterial genome analysis: operons encoding homologues of sugar-specific permease domains of the phosphotransferase system and pentose catabolic enzymes.</title>
        <authorList>
            <person name="Reizer J."/>
            <person name="Charbit A."/>
            <person name="Reizer A."/>
            <person name="Saier M.H. Jr."/>
        </authorList>
    </citation>
    <scope>DISCUSSION OF SEQUENCE</scope>
</reference>
<reference key="6">
    <citation type="journal article" date="2002" name="J. Bacteriol.">
        <title>Utilization of L-ascorbate by Escherichia coli K-12: assignments of functions to products of the yjf-sga and yia-sgb operons.</title>
        <authorList>
            <person name="Yew W.S."/>
            <person name="Gerlt J.A."/>
        </authorList>
    </citation>
    <scope>FUNCTION</scope>
    <scope>CATALYTIC ACTIVITY</scope>
    <source>
        <strain>K12 / MG1655 / ATCC 47076</strain>
    </source>
</reference>
<organism>
    <name type="scientific">Escherichia coli (strain K12)</name>
    <dbReference type="NCBI Taxonomy" id="83333"/>
    <lineage>
        <taxon>Bacteria</taxon>
        <taxon>Pseudomonadati</taxon>
        <taxon>Pseudomonadota</taxon>
        <taxon>Gammaproteobacteria</taxon>
        <taxon>Enterobacterales</taxon>
        <taxon>Enterobacteriaceae</taxon>
        <taxon>Escherichia</taxon>
    </lineage>
</organism>